<comment type="function">
    <text evidence="1">Involved in peptide bond synthesis. Alleviates ribosome stalling that occurs when 3 or more consecutive Pro residues or the sequence PPG is present in a protein, possibly by augmenting the peptidyl transferase activity of the ribosome. Modification of Lys-34 is required for alleviation.</text>
</comment>
<comment type="pathway">
    <text evidence="1">Protein biosynthesis; polypeptide chain elongation.</text>
</comment>
<comment type="subcellular location">
    <subcellularLocation>
        <location evidence="1">Cytoplasm</location>
    </subcellularLocation>
</comment>
<comment type="PTM">
    <text evidence="1">May be beta-lysylated on the epsilon-amino group of Lys-34 by the combined action of EpmA and EpmB, and then hydroxylated on the C5 position of the same residue by EpmC (if this protein is present). Lysylation is critical for the stimulatory effect of EF-P on peptide-bond formation. The lysylation moiety may extend toward the peptidyltransferase center and stabilize the terminal 3-CCA end of the tRNA. Hydroxylation of the C5 position on Lys-34 may allow additional potential stabilizing hydrogen-bond interactions with the P-tRNA.</text>
</comment>
<comment type="similarity">
    <text evidence="1">Belongs to the elongation factor P family.</text>
</comment>
<evidence type="ECO:0000255" key="1">
    <source>
        <dbReference type="HAMAP-Rule" id="MF_00141"/>
    </source>
</evidence>
<reference key="1">
    <citation type="submission" date="2007-12" db="EMBL/GenBank/DDBJ databases">
        <title>Complete sequence of chromosome of Francisella philomiragia subsp. philomiragia ATCC 25017.</title>
        <authorList>
            <consortium name="US DOE Joint Genome Institute"/>
            <person name="Copeland A."/>
            <person name="Lucas S."/>
            <person name="Lapidus A."/>
            <person name="Barry K."/>
            <person name="Detter J.C."/>
            <person name="Glavina del Rio T."/>
            <person name="Hammon N."/>
            <person name="Israni S."/>
            <person name="Dalin E."/>
            <person name="Tice H."/>
            <person name="Pitluck S."/>
            <person name="Chain P."/>
            <person name="Malfatti S."/>
            <person name="Shin M."/>
            <person name="Vergez L."/>
            <person name="Schmutz J."/>
            <person name="Larimer F."/>
            <person name="Land M."/>
            <person name="Hauser L."/>
            <person name="Richardson P."/>
        </authorList>
    </citation>
    <scope>NUCLEOTIDE SEQUENCE [LARGE SCALE GENOMIC DNA]</scope>
    <source>
        <strain>ATCC 25017 / CCUG 19701 / FSC 153 / O#319-036</strain>
    </source>
</reference>
<sequence length="189" mass="20925">MASYSTNEFKGGLKILIDGNPMVIVENEFVKPGKGQAFNRVKLKNLLNDRVVEKTFKSGESVEAADVEELNAVYSYFDGDSYVFMHPETFEQYMVSQEALGETKKWLKDQDEYQIILFNGQPISIIAPNFVNLEIVETDPGLKGDTAGTGGKPATLSTGAVVRVPLFVQTGEIIKVDTRTSTYVSRVKD</sequence>
<proteinExistence type="inferred from homology"/>
<organism>
    <name type="scientific">Francisella philomiragia subsp. philomiragia (strain ATCC 25017 / CCUG 19701 / FSC 153 / O#319-036)</name>
    <dbReference type="NCBI Taxonomy" id="484022"/>
    <lineage>
        <taxon>Bacteria</taxon>
        <taxon>Pseudomonadati</taxon>
        <taxon>Pseudomonadota</taxon>
        <taxon>Gammaproteobacteria</taxon>
        <taxon>Thiotrichales</taxon>
        <taxon>Francisellaceae</taxon>
        <taxon>Francisella</taxon>
    </lineage>
</organism>
<accession>B0TW77</accession>
<gene>
    <name evidence="1" type="primary">efp</name>
    <name type="ordered locus">Fphi_0764</name>
</gene>
<keyword id="KW-0963">Cytoplasm</keyword>
<keyword id="KW-0251">Elongation factor</keyword>
<keyword id="KW-0379">Hydroxylation</keyword>
<keyword id="KW-0648">Protein biosynthesis</keyword>
<feature type="chain" id="PRO_1000076515" description="Elongation factor P">
    <location>
        <begin position="1"/>
        <end position="189"/>
    </location>
</feature>
<feature type="modified residue" description="N6-(3,6-diaminohexanoyl)-5-hydroxylysine" evidence="1">
    <location>
        <position position="34"/>
    </location>
</feature>
<name>EFP_FRAP2</name>
<protein>
    <recommendedName>
        <fullName evidence="1">Elongation factor P</fullName>
        <shortName evidence="1">EF-P</shortName>
    </recommendedName>
</protein>
<dbReference type="EMBL" id="CP000937">
    <property type="protein sequence ID" value="ABZ86985.1"/>
    <property type="molecule type" value="Genomic_DNA"/>
</dbReference>
<dbReference type="SMR" id="B0TW77"/>
<dbReference type="KEGG" id="fph:Fphi_0764"/>
<dbReference type="eggNOG" id="COG0231">
    <property type="taxonomic scope" value="Bacteria"/>
</dbReference>
<dbReference type="HOGENOM" id="CLU_074944_0_0_6"/>
<dbReference type="UniPathway" id="UPA00345"/>
<dbReference type="GO" id="GO:0005737">
    <property type="term" value="C:cytoplasm"/>
    <property type="evidence" value="ECO:0007669"/>
    <property type="project" value="UniProtKB-SubCell"/>
</dbReference>
<dbReference type="GO" id="GO:0003746">
    <property type="term" value="F:translation elongation factor activity"/>
    <property type="evidence" value="ECO:0007669"/>
    <property type="project" value="UniProtKB-UniRule"/>
</dbReference>
<dbReference type="GO" id="GO:0043043">
    <property type="term" value="P:peptide biosynthetic process"/>
    <property type="evidence" value="ECO:0007669"/>
    <property type="project" value="InterPro"/>
</dbReference>
<dbReference type="CDD" id="cd04470">
    <property type="entry name" value="S1_EF-P_repeat_1"/>
    <property type="match status" value="1"/>
</dbReference>
<dbReference type="CDD" id="cd05794">
    <property type="entry name" value="S1_EF-P_repeat_2"/>
    <property type="match status" value="1"/>
</dbReference>
<dbReference type="FunFam" id="2.30.30.30:FF:000003">
    <property type="entry name" value="Elongation factor P"/>
    <property type="match status" value="1"/>
</dbReference>
<dbReference type="FunFam" id="2.40.50.140:FF:000004">
    <property type="entry name" value="Elongation factor P"/>
    <property type="match status" value="1"/>
</dbReference>
<dbReference type="FunFam" id="2.40.50.140:FF:000009">
    <property type="entry name" value="Elongation factor P"/>
    <property type="match status" value="1"/>
</dbReference>
<dbReference type="Gene3D" id="2.30.30.30">
    <property type="match status" value="1"/>
</dbReference>
<dbReference type="Gene3D" id="2.40.50.140">
    <property type="entry name" value="Nucleic acid-binding proteins"/>
    <property type="match status" value="2"/>
</dbReference>
<dbReference type="HAMAP" id="MF_00141">
    <property type="entry name" value="EF_P"/>
    <property type="match status" value="1"/>
</dbReference>
<dbReference type="InterPro" id="IPR015365">
    <property type="entry name" value="Elong-fact-P_C"/>
</dbReference>
<dbReference type="InterPro" id="IPR012340">
    <property type="entry name" value="NA-bd_OB-fold"/>
</dbReference>
<dbReference type="InterPro" id="IPR014722">
    <property type="entry name" value="Rib_uL2_dom2"/>
</dbReference>
<dbReference type="InterPro" id="IPR020599">
    <property type="entry name" value="Transl_elong_fac_P/YeiP"/>
</dbReference>
<dbReference type="InterPro" id="IPR013185">
    <property type="entry name" value="Transl_elong_KOW-like"/>
</dbReference>
<dbReference type="InterPro" id="IPR001059">
    <property type="entry name" value="Transl_elong_P/YeiP_cen"/>
</dbReference>
<dbReference type="InterPro" id="IPR013852">
    <property type="entry name" value="Transl_elong_P/YeiP_CS"/>
</dbReference>
<dbReference type="InterPro" id="IPR011768">
    <property type="entry name" value="Transl_elongation_fac_P"/>
</dbReference>
<dbReference type="InterPro" id="IPR008991">
    <property type="entry name" value="Translation_prot_SH3-like_sf"/>
</dbReference>
<dbReference type="NCBIfam" id="TIGR00038">
    <property type="entry name" value="efp"/>
    <property type="match status" value="1"/>
</dbReference>
<dbReference type="NCBIfam" id="NF001810">
    <property type="entry name" value="PRK00529.1"/>
    <property type="match status" value="1"/>
</dbReference>
<dbReference type="PANTHER" id="PTHR30053">
    <property type="entry name" value="ELONGATION FACTOR P"/>
    <property type="match status" value="1"/>
</dbReference>
<dbReference type="PANTHER" id="PTHR30053:SF12">
    <property type="entry name" value="ELONGATION FACTOR P (EF-P) FAMILY PROTEIN"/>
    <property type="match status" value="1"/>
</dbReference>
<dbReference type="Pfam" id="PF01132">
    <property type="entry name" value="EFP"/>
    <property type="match status" value="1"/>
</dbReference>
<dbReference type="Pfam" id="PF08207">
    <property type="entry name" value="EFP_N"/>
    <property type="match status" value="1"/>
</dbReference>
<dbReference type="Pfam" id="PF09285">
    <property type="entry name" value="Elong-fact-P_C"/>
    <property type="match status" value="1"/>
</dbReference>
<dbReference type="PIRSF" id="PIRSF005901">
    <property type="entry name" value="EF-P"/>
    <property type="match status" value="1"/>
</dbReference>
<dbReference type="SMART" id="SM01185">
    <property type="entry name" value="EFP"/>
    <property type="match status" value="1"/>
</dbReference>
<dbReference type="SMART" id="SM00841">
    <property type="entry name" value="Elong-fact-P_C"/>
    <property type="match status" value="1"/>
</dbReference>
<dbReference type="SUPFAM" id="SSF50249">
    <property type="entry name" value="Nucleic acid-binding proteins"/>
    <property type="match status" value="2"/>
</dbReference>
<dbReference type="SUPFAM" id="SSF50104">
    <property type="entry name" value="Translation proteins SH3-like domain"/>
    <property type="match status" value="1"/>
</dbReference>
<dbReference type="PROSITE" id="PS01275">
    <property type="entry name" value="EFP"/>
    <property type="match status" value="1"/>
</dbReference>